<evidence type="ECO:0000250" key="1">
    <source>
        <dbReference type="UniProtKB" id="P04698"/>
    </source>
</evidence>
<evidence type="ECO:0000255" key="2"/>
<evidence type="ECO:0000303" key="3">
    <source>
    </source>
</evidence>
<evidence type="ECO:0000305" key="4"/>
<evidence type="ECO:0000312" key="5">
    <source>
        <dbReference type="EMBL" id="AAK32950.1"/>
    </source>
</evidence>
<feature type="signal peptide" evidence="2">
    <location>
        <begin position="1"/>
        <end position="21"/>
    </location>
</feature>
<feature type="chain" id="PRO_5004324061" description="22 kDa alpha-zein 8" evidence="2">
    <location>
        <begin position="22"/>
        <end position="266"/>
    </location>
</feature>
<feature type="sequence conflict" description="In Ref. 1; AAC01576." evidence="4" ref="1">
    <original>A</original>
    <variation>G</variation>
    <location>
        <position position="213"/>
    </location>
</feature>
<organism evidence="5">
    <name type="scientific">Zea mays</name>
    <name type="common">Maize</name>
    <dbReference type="NCBI Taxonomy" id="4577"/>
    <lineage>
        <taxon>Eukaryota</taxon>
        <taxon>Viridiplantae</taxon>
        <taxon>Streptophyta</taxon>
        <taxon>Embryophyta</taxon>
        <taxon>Tracheophyta</taxon>
        <taxon>Spermatophyta</taxon>
        <taxon>Magnoliopsida</taxon>
        <taxon>Liliopsida</taxon>
        <taxon>Poales</taxon>
        <taxon>Poaceae</taxon>
        <taxon>PACMAD clade</taxon>
        <taxon>Panicoideae</taxon>
        <taxon>Andropogonodae</taxon>
        <taxon>Andropogoneae</taxon>
        <taxon>Tripsacinae</taxon>
        <taxon>Zea</taxon>
    </lineage>
</organism>
<reference key="1">
    <citation type="journal article" date="2001" name="Genome Res.">
        <title>Sequence, regulation, and evolution of the maize 22-kD alpha zein gene family.</title>
        <authorList>
            <person name="Song R."/>
            <person name="Llaca V."/>
            <person name="Linton E."/>
            <person name="Messing J."/>
        </authorList>
    </citation>
    <scope>NUCLEOTIDE SEQUENCE [GENOMIC DNA]</scope>
    <scope>GENE FAMILY</scope>
    <scope>NOMENCLATURE</scope>
    <source>
        <strain>cv. BSSS53</strain>
    </source>
</reference>
<proteinExistence type="inferred from homology"/>
<comment type="function">
    <text evidence="4">Zeins are major seed storage proteins.</text>
</comment>
<comment type="miscellaneous">
    <text>The alpha zeins of 19 kDa and 22 kDa account for 70% of the total zein fraction. They are encoded by a large multigene family.</text>
</comment>
<comment type="miscellaneous">
    <text evidence="1">Structurally, 22K and 19K zeins are composed of nine adjacent, topologically antiparallel helices clustered within a distorted cylinder.</text>
</comment>
<comment type="similarity">
    <text evidence="4">Belongs to the zein family.</text>
</comment>
<gene>
    <name evidence="3" type="primary">AZS22-8</name>
</gene>
<sequence length="266" mass="29033">MATKILALLALLALFVSATNAFIIPQCSLAPSAIIPQFLRPVTSMGFEHLAVQAYRLQQALAASVLQQPINQLQQQSLAHLTIQTIATQQQQQFLPALSQLDVVNPVAYLQQQVLASNPLALANVAAYQQQQQLQQFLPALSQLAMVNPAAYLQQQQLLSSSPLVVGNAPTYLQQQLLQQIVPALTQLAVANPAAYLQQLLPFNQLTVSNSAAYLQQRQQLLNPLAVPNPLVTAFLQQQQLLPYSQFSLMNPALSWQQPIVGGAIF</sequence>
<protein>
    <recommendedName>
        <fullName evidence="3">22 kDa alpha-zein 8</fullName>
    </recommendedName>
</protein>
<name>ZEAYS_MAIZE</name>
<dbReference type="EMBL" id="AF090447">
    <property type="protein sequence ID" value="AAK32950.1"/>
    <property type="molecule type" value="Genomic_DNA"/>
</dbReference>
<dbReference type="EMBL" id="AF031569">
    <property type="protein sequence ID" value="AAC01576.1"/>
    <property type="molecule type" value="Genomic_DNA"/>
</dbReference>
<dbReference type="PIR" id="T01326">
    <property type="entry name" value="T01326"/>
</dbReference>
<dbReference type="RefSeq" id="NP_001106000.1">
    <property type="nucleotide sequence ID" value="NM_001112530.1"/>
</dbReference>
<dbReference type="STRING" id="4577.Q9AR71"/>
<dbReference type="GeneID" id="100038318"/>
<dbReference type="KEGG" id="zma:100038318"/>
<dbReference type="InParanoid" id="Q9AR71"/>
<dbReference type="Proteomes" id="UP000007305">
    <property type="component" value="Unplaced"/>
</dbReference>
<dbReference type="ExpressionAtlas" id="Q9AR71">
    <property type="expression patterns" value="baseline and differential"/>
</dbReference>
<dbReference type="GO" id="GO:0045735">
    <property type="term" value="F:nutrient reservoir activity"/>
    <property type="evidence" value="ECO:0007669"/>
    <property type="project" value="UniProtKB-KW"/>
</dbReference>
<dbReference type="InterPro" id="IPR051529">
    <property type="entry name" value="Seed_Storage_Prolamin"/>
</dbReference>
<dbReference type="InterPro" id="IPR002530">
    <property type="entry name" value="Zein"/>
</dbReference>
<dbReference type="PANTHER" id="PTHR48199">
    <property type="entry name" value="ALPHA KAFIRIN"/>
    <property type="match status" value="1"/>
</dbReference>
<dbReference type="PANTHER" id="PTHR48199:SF1">
    <property type="entry name" value="ALPHA KAFIRIN"/>
    <property type="match status" value="1"/>
</dbReference>
<dbReference type="Pfam" id="PF01559">
    <property type="entry name" value="Zein"/>
    <property type="match status" value="1"/>
</dbReference>
<accession>Q9AR71</accession>
<accession>O48969</accession>
<keyword id="KW-1185">Reference proteome</keyword>
<keyword id="KW-0708">Seed storage protein</keyword>
<keyword id="KW-0732">Signal</keyword>
<keyword id="KW-0758">Storage protein</keyword>